<name>SYN_XANC8</name>
<proteinExistence type="inferred from homology"/>
<evidence type="ECO:0000255" key="1">
    <source>
        <dbReference type="HAMAP-Rule" id="MF_00534"/>
    </source>
</evidence>
<dbReference type="EC" id="6.1.1.22" evidence="1"/>
<dbReference type="EMBL" id="CP000050">
    <property type="protein sequence ID" value="AAY49722.1"/>
    <property type="molecule type" value="Genomic_DNA"/>
</dbReference>
<dbReference type="RefSeq" id="WP_011036745.1">
    <property type="nucleotide sequence ID" value="NC_007086.1"/>
</dbReference>
<dbReference type="SMR" id="Q4UTA1"/>
<dbReference type="KEGG" id="xcb:XC_2673"/>
<dbReference type="HOGENOM" id="CLU_004553_2_0_6"/>
<dbReference type="Proteomes" id="UP000000420">
    <property type="component" value="Chromosome"/>
</dbReference>
<dbReference type="GO" id="GO:0005737">
    <property type="term" value="C:cytoplasm"/>
    <property type="evidence" value="ECO:0007669"/>
    <property type="project" value="UniProtKB-SubCell"/>
</dbReference>
<dbReference type="GO" id="GO:0004816">
    <property type="term" value="F:asparagine-tRNA ligase activity"/>
    <property type="evidence" value="ECO:0007669"/>
    <property type="project" value="UniProtKB-UniRule"/>
</dbReference>
<dbReference type="GO" id="GO:0005524">
    <property type="term" value="F:ATP binding"/>
    <property type="evidence" value="ECO:0007669"/>
    <property type="project" value="UniProtKB-UniRule"/>
</dbReference>
<dbReference type="GO" id="GO:0003676">
    <property type="term" value="F:nucleic acid binding"/>
    <property type="evidence" value="ECO:0007669"/>
    <property type="project" value="InterPro"/>
</dbReference>
<dbReference type="GO" id="GO:0006421">
    <property type="term" value="P:asparaginyl-tRNA aminoacylation"/>
    <property type="evidence" value="ECO:0007669"/>
    <property type="project" value="UniProtKB-UniRule"/>
</dbReference>
<dbReference type="CDD" id="cd00776">
    <property type="entry name" value="AsxRS_core"/>
    <property type="match status" value="1"/>
</dbReference>
<dbReference type="CDD" id="cd04318">
    <property type="entry name" value="EcAsnRS_like_N"/>
    <property type="match status" value="1"/>
</dbReference>
<dbReference type="FunFam" id="3.30.930.10:FF:000016">
    <property type="entry name" value="Asparagine--tRNA ligase"/>
    <property type="match status" value="1"/>
</dbReference>
<dbReference type="Gene3D" id="3.30.930.10">
    <property type="entry name" value="Bira Bifunctional Protein, Domain 2"/>
    <property type="match status" value="1"/>
</dbReference>
<dbReference type="Gene3D" id="2.40.50.140">
    <property type="entry name" value="Nucleic acid-binding proteins"/>
    <property type="match status" value="1"/>
</dbReference>
<dbReference type="HAMAP" id="MF_00534">
    <property type="entry name" value="Asn_tRNA_synth"/>
    <property type="match status" value="1"/>
</dbReference>
<dbReference type="InterPro" id="IPR004364">
    <property type="entry name" value="Aa-tRNA-synt_II"/>
</dbReference>
<dbReference type="InterPro" id="IPR006195">
    <property type="entry name" value="aa-tRNA-synth_II"/>
</dbReference>
<dbReference type="InterPro" id="IPR045864">
    <property type="entry name" value="aa-tRNA-synth_II/BPL/LPL"/>
</dbReference>
<dbReference type="InterPro" id="IPR004522">
    <property type="entry name" value="Asn-tRNA-ligase"/>
</dbReference>
<dbReference type="InterPro" id="IPR002312">
    <property type="entry name" value="Asp/Asn-tRNA-synth_IIb"/>
</dbReference>
<dbReference type="InterPro" id="IPR012340">
    <property type="entry name" value="NA-bd_OB-fold"/>
</dbReference>
<dbReference type="InterPro" id="IPR004365">
    <property type="entry name" value="NA-bd_OB_tRNA"/>
</dbReference>
<dbReference type="NCBIfam" id="TIGR00457">
    <property type="entry name" value="asnS"/>
    <property type="match status" value="1"/>
</dbReference>
<dbReference type="NCBIfam" id="NF003037">
    <property type="entry name" value="PRK03932.1"/>
    <property type="match status" value="1"/>
</dbReference>
<dbReference type="PANTHER" id="PTHR22594:SF34">
    <property type="entry name" value="ASPARAGINE--TRNA LIGASE, MITOCHONDRIAL-RELATED"/>
    <property type="match status" value="1"/>
</dbReference>
<dbReference type="PANTHER" id="PTHR22594">
    <property type="entry name" value="ASPARTYL/LYSYL-TRNA SYNTHETASE"/>
    <property type="match status" value="1"/>
</dbReference>
<dbReference type="Pfam" id="PF00152">
    <property type="entry name" value="tRNA-synt_2"/>
    <property type="match status" value="1"/>
</dbReference>
<dbReference type="Pfam" id="PF01336">
    <property type="entry name" value="tRNA_anti-codon"/>
    <property type="match status" value="1"/>
</dbReference>
<dbReference type="PRINTS" id="PR01042">
    <property type="entry name" value="TRNASYNTHASP"/>
</dbReference>
<dbReference type="SUPFAM" id="SSF55681">
    <property type="entry name" value="Class II aaRS and biotin synthetases"/>
    <property type="match status" value="1"/>
</dbReference>
<dbReference type="SUPFAM" id="SSF50249">
    <property type="entry name" value="Nucleic acid-binding proteins"/>
    <property type="match status" value="1"/>
</dbReference>
<dbReference type="PROSITE" id="PS50862">
    <property type="entry name" value="AA_TRNA_LIGASE_II"/>
    <property type="match status" value="1"/>
</dbReference>
<protein>
    <recommendedName>
        <fullName evidence="1">Asparagine--tRNA ligase</fullName>
        <ecNumber evidence="1">6.1.1.22</ecNumber>
    </recommendedName>
    <alternativeName>
        <fullName evidence="1">Asparaginyl-tRNA synthetase</fullName>
        <shortName evidence="1">AsnRS</shortName>
    </alternativeName>
</protein>
<comment type="catalytic activity">
    <reaction evidence="1">
        <text>tRNA(Asn) + L-asparagine + ATP = L-asparaginyl-tRNA(Asn) + AMP + diphosphate + H(+)</text>
        <dbReference type="Rhea" id="RHEA:11180"/>
        <dbReference type="Rhea" id="RHEA-COMP:9659"/>
        <dbReference type="Rhea" id="RHEA-COMP:9674"/>
        <dbReference type="ChEBI" id="CHEBI:15378"/>
        <dbReference type="ChEBI" id="CHEBI:30616"/>
        <dbReference type="ChEBI" id="CHEBI:33019"/>
        <dbReference type="ChEBI" id="CHEBI:58048"/>
        <dbReference type="ChEBI" id="CHEBI:78442"/>
        <dbReference type="ChEBI" id="CHEBI:78515"/>
        <dbReference type="ChEBI" id="CHEBI:456215"/>
        <dbReference type="EC" id="6.1.1.22"/>
    </reaction>
</comment>
<comment type="subunit">
    <text evidence="1">Homodimer.</text>
</comment>
<comment type="subcellular location">
    <subcellularLocation>
        <location>Cytoplasm</location>
    </subcellularLocation>
</comment>
<comment type="similarity">
    <text evidence="1">Belongs to the class-II aminoacyl-tRNA synthetase family.</text>
</comment>
<organism>
    <name type="scientific">Xanthomonas campestris pv. campestris (strain 8004)</name>
    <dbReference type="NCBI Taxonomy" id="314565"/>
    <lineage>
        <taxon>Bacteria</taxon>
        <taxon>Pseudomonadati</taxon>
        <taxon>Pseudomonadota</taxon>
        <taxon>Gammaproteobacteria</taxon>
        <taxon>Lysobacterales</taxon>
        <taxon>Lysobacteraceae</taxon>
        <taxon>Xanthomonas</taxon>
    </lineage>
</organism>
<feature type="chain" id="PRO_1000051456" description="Asparagine--tRNA ligase">
    <location>
        <begin position="1"/>
        <end position="464"/>
    </location>
</feature>
<sequence>MTVVSVEHALAGKIPEGGEVTVRGWVRTLRGSAGLAFINVTDGSCFAPIQVVATDTLPNFDEIKRLTSGCSLIAKGVLVKSQGKGQSFEIQASGVEIVGWVEDPLTYPIQPKPMSPEFLREVAHLRPRTNLFGAVTRIRNCLAQAVHRFFHQNGFNWISTPIITTSDAEGAGQMFRVSSLDMVNLPRTAQGEVDFSRDFFGKETFLTVSGQLNVEAYCLALSKVYTFGPTFRAENSHTTRHLAEFWMIEPEIAFADLAEDARLAEQFLKYLFRAVLDERGDDLAFLAERVDKNAISKLEAFINAPFEQIDYTEAVKLLQNSGKKFDFPVEWGLDLQTEHERWLTEEHIGRPVVVTNYPEHIKAFYMRLNDDGKTVAAMDVLAPGIGEIIGGSQREERLDVLDARMAQFGLDKEHYSWYRDFRRYGSVPHAGFGLGFERLVVYVCGLSNIRDAIPYPRAPGSAEF</sequence>
<gene>
    <name evidence="1" type="primary">asnS</name>
    <name type="ordered locus">XC_2673</name>
</gene>
<accession>Q4UTA1</accession>
<reference key="1">
    <citation type="journal article" date="2005" name="Genome Res.">
        <title>Comparative and functional genomic analyses of the pathogenicity of phytopathogen Xanthomonas campestris pv. campestris.</title>
        <authorList>
            <person name="Qian W."/>
            <person name="Jia Y."/>
            <person name="Ren S.-X."/>
            <person name="He Y.-Q."/>
            <person name="Feng J.-X."/>
            <person name="Lu L.-F."/>
            <person name="Sun Q."/>
            <person name="Ying G."/>
            <person name="Tang D.-J."/>
            <person name="Tang H."/>
            <person name="Wu W."/>
            <person name="Hao P."/>
            <person name="Wang L."/>
            <person name="Jiang B.-L."/>
            <person name="Zeng S."/>
            <person name="Gu W.-Y."/>
            <person name="Lu G."/>
            <person name="Rong L."/>
            <person name="Tian Y."/>
            <person name="Yao Z."/>
            <person name="Fu G."/>
            <person name="Chen B."/>
            <person name="Fang R."/>
            <person name="Qiang B."/>
            <person name="Chen Z."/>
            <person name="Zhao G.-P."/>
            <person name="Tang J.-L."/>
            <person name="He C."/>
        </authorList>
    </citation>
    <scope>NUCLEOTIDE SEQUENCE [LARGE SCALE GENOMIC DNA]</scope>
    <source>
        <strain>8004</strain>
    </source>
</reference>
<keyword id="KW-0030">Aminoacyl-tRNA synthetase</keyword>
<keyword id="KW-0067">ATP-binding</keyword>
<keyword id="KW-0963">Cytoplasm</keyword>
<keyword id="KW-0436">Ligase</keyword>
<keyword id="KW-0547">Nucleotide-binding</keyword>
<keyword id="KW-0648">Protein biosynthesis</keyword>